<sequence length="222" mass="25103">MHYREKSLGELAIAIPRATALFREFNLDFCCGGKQTLQHAAGKRQLDIAMLEARLAELDAEPPSEKNWRAAPLNDMIPYIVQRFHDRHREQLPELIIMAEKVERVHQDKSACPHGLAAQLTLILDDLSQHMMKEERILFPMIQAGMGRQAAGPISVMEHEHDDAGQQLEVVKTLTDNLTPPADACNTWRALYAGIGEFITDLMEHIHLENNLLFPRALRGEA</sequence>
<gene>
    <name evidence="1" type="primary">ytfE</name>
    <name type="ordered locus">Dd703_0815</name>
</gene>
<accession>C6CAS5</accession>
<comment type="function">
    <text evidence="1">Di-iron-containing protein involved in the repair of iron-sulfur clusters damaged by oxidative and nitrosative stress conditions.</text>
</comment>
<comment type="subunit">
    <text evidence="1">Homodimer.</text>
</comment>
<comment type="subcellular location">
    <subcellularLocation>
        <location evidence="1">Cytoplasm</location>
    </subcellularLocation>
</comment>
<comment type="similarity">
    <text evidence="1">Belongs to the RIC family. YtfE subfamily.</text>
</comment>
<dbReference type="EMBL" id="CP001654">
    <property type="protein sequence ID" value="ACS84625.1"/>
    <property type="molecule type" value="Genomic_DNA"/>
</dbReference>
<dbReference type="RefSeq" id="WP_012764443.1">
    <property type="nucleotide sequence ID" value="NC_012880.1"/>
</dbReference>
<dbReference type="SMR" id="C6CAS5"/>
<dbReference type="STRING" id="579405.Dd703_0815"/>
<dbReference type="KEGG" id="dda:Dd703_0815"/>
<dbReference type="eggNOG" id="COG2846">
    <property type="taxonomic scope" value="Bacteria"/>
</dbReference>
<dbReference type="HOGENOM" id="CLU_076075_2_0_6"/>
<dbReference type="Proteomes" id="UP000002734">
    <property type="component" value="Chromosome"/>
</dbReference>
<dbReference type="GO" id="GO:0005737">
    <property type="term" value="C:cytoplasm"/>
    <property type="evidence" value="ECO:0007669"/>
    <property type="project" value="UniProtKB-SubCell"/>
</dbReference>
<dbReference type="GO" id="GO:0046872">
    <property type="term" value="F:metal ion binding"/>
    <property type="evidence" value="ECO:0007669"/>
    <property type="project" value="UniProtKB-KW"/>
</dbReference>
<dbReference type="GO" id="GO:0030091">
    <property type="term" value="P:protein repair"/>
    <property type="evidence" value="ECO:0007669"/>
    <property type="project" value="UniProtKB-UniRule"/>
</dbReference>
<dbReference type="GO" id="GO:0051409">
    <property type="term" value="P:response to nitrosative stress"/>
    <property type="evidence" value="ECO:0007669"/>
    <property type="project" value="UniProtKB-UniRule"/>
</dbReference>
<dbReference type="GO" id="GO:0006979">
    <property type="term" value="P:response to oxidative stress"/>
    <property type="evidence" value="ECO:0007669"/>
    <property type="project" value="UniProtKB-UniRule"/>
</dbReference>
<dbReference type="Gene3D" id="1.20.120.520">
    <property type="entry name" value="nmb1532 protein domain like"/>
    <property type="match status" value="1"/>
</dbReference>
<dbReference type="HAMAP" id="MF_01606">
    <property type="entry name" value="RIC_YtfE"/>
    <property type="match status" value="1"/>
</dbReference>
<dbReference type="InterPro" id="IPR023742">
    <property type="entry name" value="FeS-repair_YftE"/>
</dbReference>
<dbReference type="InterPro" id="IPR012312">
    <property type="entry name" value="Hemerythrin-like"/>
</dbReference>
<dbReference type="InterPro" id="IPR019903">
    <property type="entry name" value="RIC_family"/>
</dbReference>
<dbReference type="NCBIfam" id="TIGR03652">
    <property type="entry name" value="FeS_repair_RIC"/>
    <property type="match status" value="1"/>
</dbReference>
<dbReference type="NCBIfam" id="NF008221">
    <property type="entry name" value="PRK10992.1"/>
    <property type="match status" value="1"/>
</dbReference>
<dbReference type="PANTHER" id="PTHR36438">
    <property type="entry name" value="IRON-SULFUR CLUSTER REPAIR PROTEIN YTFE"/>
    <property type="match status" value="1"/>
</dbReference>
<dbReference type="PANTHER" id="PTHR36438:SF1">
    <property type="entry name" value="IRON-SULFUR CLUSTER REPAIR PROTEIN YTFE"/>
    <property type="match status" value="1"/>
</dbReference>
<dbReference type="Pfam" id="PF01814">
    <property type="entry name" value="Hemerythrin"/>
    <property type="match status" value="1"/>
</dbReference>
<dbReference type="Pfam" id="PF04405">
    <property type="entry name" value="ScdA_N"/>
    <property type="match status" value="1"/>
</dbReference>
<reference key="1">
    <citation type="submission" date="2009-06" db="EMBL/GenBank/DDBJ databases">
        <title>Complete sequence of Dickeya dadantii Ech703.</title>
        <authorList>
            <consortium name="US DOE Joint Genome Institute"/>
            <person name="Lucas S."/>
            <person name="Copeland A."/>
            <person name="Lapidus A."/>
            <person name="Glavina del Rio T."/>
            <person name="Dalin E."/>
            <person name="Tice H."/>
            <person name="Bruce D."/>
            <person name="Goodwin L."/>
            <person name="Pitluck S."/>
            <person name="Chertkov O."/>
            <person name="Brettin T."/>
            <person name="Detter J.C."/>
            <person name="Han C."/>
            <person name="Larimer F."/>
            <person name="Land M."/>
            <person name="Hauser L."/>
            <person name="Kyrpides N."/>
            <person name="Mikhailova N."/>
            <person name="Balakrishnan V."/>
            <person name="Glasner J."/>
            <person name="Perna N.T."/>
        </authorList>
    </citation>
    <scope>NUCLEOTIDE SEQUENCE [LARGE SCALE GENOMIC DNA]</scope>
    <source>
        <strain>Ech703</strain>
    </source>
</reference>
<evidence type="ECO:0000255" key="1">
    <source>
        <dbReference type="HAMAP-Rule" id="MF_01606"/>
    </source>
</evidence>
<feature type="chain" id="PRO_0000406125" description="Iron-sulfur cluster repair protein YtfE">
    <location>
        <begin position="1"/>
        <end position="222"/>
    </location>
</feature>
<keyword id="KW-0963">Cytoplasm</keyword>
<keyword id="KW-0408">Iron</keyword>
<keyword id="KW-0479">Metal-binding</keyword>
<keyword id="KW-0346">Stress response</keyword>
<organism>
    <name type="scientific">Musicola paradisiaca (strain Ech703)</name>
    <name type="common">Dickeya paradisiaca</name>
    <name type="synonym">Dickeya dadantii</name>
    <dbReference type="NCBI Taxonomy" id="579405"/>
    <lineage>
        <taxon>Bacteria</taxon>
        <taxon>Pseudomonadati</taxon>
        <taxon>Pseudomonadota</taxon>
        <taxon>Gammaproteobacteria</taxon>
        <taxon>Enterobacterales</taxon>
        <taxon>Pectobacteriaceae</taxon>
        <taxon>Musicola</taxon>
    </lineage>
</organism>
<proteinExistence type="inferred from homology"/>
<name>YTFE_MUSP7</name>
<protein>
    <recommendedName>
        <fullName evidence="1">Iron-sulfur cluster repair protein YtfE</fullName>
    </recommendedName>
</protein>